<dbReference type="EC" id="3.1.26.5" evidence="1"/>
<dbReference type="EMBL" id="CP000847">
    <property type="protein sequence ID" value="ABV75216.1"/>
    <property type="molecule type" value="Genomic_DNA"/>
</dbReference>
<dbReference type="RefSeq" id="WP_012149846.1">
    <property type="nucleotide sequence ID" value="NC_009881.1"/>
</dbReference>
<dbReference type="SMR" id="A8GP91"/>
<dbReference type="STRING" id="293614.A1C_04780"/>
<dbReference type="KEGG" id="rak:A1C_04780"/>
<dbReference type="eggNOG" id="COG0594">
    <property type="taxonomic scope" value="Bacteria"/>
</dbReference>
<dbReference type="HOGENOM" id="CLU_2047938_0_0_5"/>
<dbReference type="Proteomes" id="UP000006830">
    <property type="component" value="Chromosome"/>
</dbReference>
<dbReference type="GO" id="GO:0030677">
    <property type="term" value="C:ribonuclease P complex"/>
    <property type="evidence" value="ECO:0007669"/>
    <property type="project" value="TreeGrafter"/>
</dbReference>
<dbReference type="GO" id="GO:0042781">
    <property type="term" value="F:3'-tRNA processing endoribonuclease activity"/>
    <property type="evidence" value="ECO:0007669"/>
    <property type="project" value="TreeGrafter"/>
</dbReference>
<dbReference type="GO" id="GO:0004526">
    <property type="term" value="F:ribonuclease P activity"/>
    <property type="evidence" value="ECO:0007669"/>
    <property type="project" value="UniProtKB-UniRule"/>
</dbReference>
<dbReference type="GO" id="GO:0000049">
    <property type="term" value="F:tRNA binding"/>
    <property type="evidence" value="ECO:0007669"/>
    <property type="project" value="UniProtKB-UniRule"/>
</dbReference>
<dbReference type="GO" id="GO:0001682">
    <property type="term" value="P:tRNA 5'-leader removal"/>
    <property type="evidence" value="ECO:0007669"/>
    <property type="project" value="UniProtKB-UniRule"/>
</dbReference>
<dbReference type="Gene3D" id="3.30.230.10">
    <property type="match status" value="1"/>
</dbReference>
<dbReference type="HAMAP" id="MF_00227">
    <property type="entry name" value="RNase_P"/>
    <property type="match status" value="1"/>
</dbReference>
<dbReference type="InterPro" id="IPR020568">
    <property type="entry name" value="Ribosomal_Su5_D2-typ_SF"/>
</dbReference>
<dbReference type="InterPro" id="IPR014721">
    <property type="entry name" value="Ribsml_uS5_D2-typ_fold_subgr"/>
</dbReference>
<dbReference type="InterPro" id="IPR000100">
    <property type="entry name" value="RNase_P"/>
</dbReference>
<dbReference type="InterPro" id="IPR020539">
    <property type="entry name" value="RNase_P_CS"/>
</dbReference>
<dbReference type="NCBIfam" id="TIGR00188">
    <property type="entry name" value="rnpA"/>
    <property type="match status" value="1"/>
</dbReference>
<dbReference type="PANTHER" id="PTHR33992">
    <property type="entry name" value="RIBONUCLEASE P PROTEIN COMPONENT"/>
    <property type="match status" value="1"/>
</dbReference>
<dbReference type="PANTHER" id="PTHR33992:SF1">
    <property type="entry name" value="RIBONUCLEASE P PROTEIN COMPONENT"/>
    <property type="match status" value="1"/>
</dbReference>
<dbReference type="Pfam" id="PF00825">
    <property type="entry name" value="Ribonuclease_P"/>
    <property type="match status" value="1"/>
</dbReference>
<dbReference type="SUPFAM" id="SSF54211">
    <property type="entry name" value="Ribosomal protein S5 domain 2-like"/>
    <property type="match status" value="1"/>
</dbReference>
<dbReference type="PROSITE" id="PS00648">
    <property type="entry name" value="RIBONUCLEASE_P"/>
    <property type="match status" value="1"/>
</dbReference>
<feature type="chain" id="PRO_1000100381" description="Ribonuclease P protein component">
    <location>
        <begin position="1"/>
        <end position="118"/>
    </location>
</feature>
<evidence type="ECO:0000255" key="1">
    <source>
        <dbReference type="HAMAP-Rule" id="MF_00227"/>
    </source>
</evidence>
<comment type="function">
    <text evidence="1">RNaseP catalyzes the removal of the 5'-leader sequence from pre-tRNA to produce the mature 5'-terminus. It can also cleave other RNA substrates such as 4.5S RNA. The protein component plays an auxiliary but essential role in vivo by binding to the 5'-leader sequence and broadening the substrate specificity of the ribozyme.</text>
</comment>
<comment type="catalytic activity">
    <reaction evidence="1">
        <text>Endonucleolytic cleavage of RNA, removing 5'-extranucleotides from tRNA precursor.</text>
        <dbReference type="EC" id="3.1.26.5"/>
    </reaction>
</comment>
<comment type="subunit">
    <text evidence="1">Consists of a catalytic RNA component (M1 or rnpB) and a protein subunit.</text>
</comment>
<comment type="similarity">
    <text evidence="1">Belongs to the RnpA family.</text>
</comment>
<gene>
    <name evidence="1" type="primary">rnpA</name>
    <name type="ordered locus">A1C_04780</name>
</gene>
<reference key="1">
    <citation type="submission" date="2007-09" db="EMBL/GenBank/DDBJ databases">
        <title>Complete genome sequence of Rickettsia akari.</title>
        <authorList>
            <person name="Madan A."/>
            <person name="Fahey J."/>
            <person name="Helton E."/>
            <person name="Ketteman M."/>
            <person name="Madan A."/>
            <person name="Rodrigues S."/>
            <person name="Sanchez A."/>
            <person name="Whiting M."/>
            <person name="Dasch G."/>
            <person name="Eremeeva M."/>
        </authorList>
    </citation>
    <scope>NUCLEOTIDE SEQUENCE [LARGE SCALE GENOMIC DNA]</scope>
    <source>
        <strain>Hartford</strain>
    </source>
</reference>
<proteinExistence type="inferred from homology"/>
<accession>A8GP91</accession>
<name>RNPA_RICAH</name>
<sequence length="118" mass="13954">MSITSLKNQKEFELINKLGKKFHERYFILVIARNLPTIFLKSQYNTFLGIKVSRKLNKKAVIRNKIKRRIRHLVRIIVSDAKLSAVKFAMIIIPRKGFEEINFSHLNYELSKIVLRNI</sequence>
<keyword id="KW-0255">Endonuclease</keyword>
<keyword id="KW-0378">Hydrolase</keyword>
<keyword id="KW-0540">Nuclease</keyword>
<keyword id="KW-0694">RNA-binding</keyword>
<keyword id="KW-0819">tRNA processing</keyword>
<organism>
    <name type="scientific">Rickettsia akari (strain Hartford)</name>
    <dbReference type="NCBI Taxonomy" id="293614"/>
    <lineage>
        <taxon>Bacteria</taxon>
        <taxon>Pseudomonadati</taxon>
        <taxon>Pseudomonadota</taxon>
        <taxon>Alphaproteobacteria</taxon>
        <taxon>Rickettsiales</taxon>
        <taxon>Rickettsiaceae</taxon>
        <taxon>Rickettsieae</taxon>
        <taxon>Rickettsia</taxon>
        <taxon>spotted fever group</taxon>
    </lineage>
</organism>
<protein>
    <recommendedName>
        <fullName evidence="1">Ribonuclease P protein component</fullName>
        <shortName evidence="1">RNase P protein</shortName>
        <shortName evidence="1">RNaseP protein</shortName>
        <ecNumber evidence="1">3.1.26.5</ecNumber>
    </recommendedName>
    <alternativeName>
        <fullName evidence="1">Protein C5</fullName>
    </alternativeName>
</protein>